<accession>P31168</accession>
<accession>Q39059</accession>
<reference key="1">
    <citation type="journal article" date="1992" name="Plant Mol. Biol.">
        <title>cDNA sequence analysis and expression of two cold-regulated genes of Arabidopsis thaliana.</title>
        <authorList>
            <person name="Gilmour S.J."/>
            <person name="Artus N.N."/>
            <person name="Thomashow M.F."/>
        </authorList>
    </citation>
    <scope>NUCLEOTIDE SEQUENCE [MRNA]</scope>
    <source>
        <strain>cv. Columbia</strain>
    </source>
</reference>
<reference key="2">
    <citation type="journal article" date="1995" name="Plant Mol. Biol.">
        <title>Structure and organization of two closely related low-temperature-induced dhn/lea/rab-like genes in Arabidopsis thaliana L. Heynh.</title>
        <authorList>
            <person name="Welin B.V."/>
            <person name="Olson A."/>
            <person name="Palva E.T."/>
        </authorList>
    </citation>
    <scope>NUCLEOTIDE SEQUENCE [GENOMIC DNA]</scope>
    <source>
        <strain>cv. Landsberg erecta</strain>
        <tissue>Leaf</tissue>
    </source>
</reference>
<reference key="3">
    <citation type="online journal article" date="1997" name="Plant Gene Register">
        <title>The dehydration-inducible Rd17 (Cor47) gene and its promoter pegion in Arabidopsis thaliana.</title>
        <authorList>
            <person name="Iwasaki T."/>
            <person name="Kiyosue T."/>
            <person name="Yamaguchi-Shinozaki K."/>
            <person name="Shinozaki K."/>
        </authorList>
        <locator>PGR97-156</locator>
    </citation>
    <scope>NUCLEOTIDE SEQUENCE [GENOMIC DNA]</scope>
    <source>
        <strain>cv. Columbia</strain>
    </source>
</reference>
<reference key="4">
    <citation type="journal article" date="2000" name="Nature">
        <title>Sequence and analysis of chromosome 1 of the plant Arabidopsis thaliana.</title>
        <authorList>
            <person name="Theologis A."/>
            <person name="Ecker J.R."/>
            <person name="Palm C.J."/>
            <person name="Federspiel N.A."/>
            <person name="Kaul S."/>
            <person name="White O."/>
            <person name="Alonso J."/>
            <person name="Altafi H."/>
            <person name="Araujo R."/>
            <person name="Bowman C.L."/>
            <person name="Brooks S.Y."/>
            <person name="Buehler E."/>
            <person name="Chan A."/>
            <person name="Chao Q."/>
            <person name="Chen H."/>
            <person name="Cheuk R.F."/>
            <person name="Chin C.W."/>
            <person name="Chung M.K."/>
            <person name="Conn L."/>
            <person name="Conway A.B."/>
            <person name="Conway A.R."/>
            <person name="Creasy T.H."/>
            <person name="Dewar K."/>
            <person name="Dunn P."/>
            <person name="Etgu P."/>
            <person name="Feldblyum T.V."/>
            <person name="Feng J.-D."/>
            <person name="Fong B."/>
            <person name="Fujii C.Y."/>
            <person name="Gill J.E."/>
            <person name="Goldsmith A.D."/>
            <person name="Haas B."/>
            <person name="Hansen N.F."/>
            <person name="Hughes B."/>
            <person name="Huizar L."/>
            <person name="Hunter J.L."/>
            <person name="Jenkins J."/>
            <person name="Johnson-Hopson C."/>
            <person name="Khan S."/>
            <person name="Khaykin E."/>
            <person name="Kim C.J."/>
            <person name="Koo H.L."/>
            <person name="Kremenetskaia I."/>
            <person name="Kurtz D.B."/>
            <person name="Kwan A."/>
            <person name="Lam B."/>
            <person name="Langin-Hooper S."/>
            <person name="Lee A."/>
            <person name="Lee J.M."/>
            <person name="Lenz C.A."/>
            <person name="Li J.H."/>
            <person name="Li Y.-P."/>
            <person name="Lin X."/>
            <person name="Liu S.X."/>
            <person name="Liu Z.A."/>
            <person name="Luros J.S."/>
            <person name="Maiti R."/>
            <person name="Marziali A."/>
            <person name="Militscher J."/>
            <person name="Miranda M."/>
            <person name="Nguyen M."/>
            <person name="Nierman W.C."/>
            <person name="Osborne B.I."/>
            <person name="Pai G."/>
            <person name="Peterson J."/>
            <person name="Pham P.K."/>
            <person name="Rizzo M."/>
            <person name="Rooney T."/>
            <person name="Rowley D."/>
            <person name="Sakano H."/>
            <person name="Salzberg S.L."/>
            <person name="Schwartz J.R."/>
            <person name="Shinn P."/>
            <person name="Southwick A.M."/>
            <person name="Sun H."/>
            <person name="Tallon L.J."/>
            <person name="Tambunga G."/>
            <person name="Toriumi M.J."/>
            <person name="Town C.D."/>
            <person name="Utterback T."/>
            <person name="Van Aken S."/>
            <person name="Vaysberg M."/>
            <person name="Vysotskaia V.S."/>
            <person name="Walker M."/>
            <person name="Wu D."/>
            <person name="Yu G."/>
            <person name="Fraser C.M."/>
            <person name="Venter J.C."/>
            <person name="Davis R.W."/>
        </authorList>
    </citation>
    <scope>NUCLEOTIDE SEQUENCE [LARGE SCALE GENOMIC DNA]</scope>
    <source>
        <strain>cv. Columbia</strain>
    </source>
</reference>
<reference key="5">
    <citation type="journal article" date="2017" name="Plant J.">
        <title>Araport11: a complete reannotation of the Arabidopsis thaliana reference genome.</title>
        <authorList>
            <person name="Cheng C.Y."/>
            <person name="Krishnakumar V."/>
            <person name="Chan A.P."/>
            <person name="Thibaud-Nissen F."/>
            <person name="Schobel S."/>
            <person name="Town C.D."/>
        </authorList>
    </citation>
    <scope>GENOME REANNOTATION</scope>
    <source>
        <strain>cv. Columbia</strain>
    </source>
</reference>
<reference key="6">
    <citation type="journal article" date="2003" name="Science">
        <title>Empirical analysis of transcriptional activity in the Arabidopsis genome.</title>
        <authorList>
            <person name="Yamada K."/>
            <person name="Lim J."/>
            <person name="Dale J.M."/>
            <person name="Chen H."/>
            <person name="Shinn P."/>
            <person name="Palm C.J."/>
            <person name="Southwick A.M."/>
            <person name="Wu H.C."/>
            <person name="Kim C.J."/>
            <person name="Nguyen M."/>
            <person name="Pham P.K."/>
            <person name="Cheuk R.F."/>
            <person name="Karlin-Newmann G."/>
            <person name="Liu S.X."/>
            <person name="Lam B."/>
            <person name="Sakano H."/>
            <person name="Wu T."/>
            <person name="Yu G."/>
            <person name="Miranda M."/>
            <person name="Quach H.L."/>
            <person name="Tripp M."/>
            <person name="Chang C.H."/>
            <person name="Lee J.M."/>
            <person name="Toriumi M.J."/>
            <person name="Chan M.M."/>
            <person name="Tang C.C."/>
            <person name="Onodera C.S."/>
            <person name="Deng J.M."/>
            <person name="Akiyama K."/>
            <person name="Ansari Y."/>
            <person name="Arakawa T."/>
            <person name="Banh J."/>
            <person name="Banno F."/>
            <person name="Bowser L."/>
            <person name="Brooks S.Y."/>
            <person name="Carninci P."/>
            <person name="Chao Q."/>
            <person name="Choy N."/>
            <person name="Enju A."/>
            <person name="Goldsmith A.D."/>
            <person name="Gurjal M."/>
            <person name="Hansen N.F."/>
            <person name="Hayashizaki Y."/>
            <person name="Johnson-Hopson C."/>
            <person name="Hsuan V.W."/>
            <person name="Iida K."/>
            <person name="Karnes M."/>
            <person name="Khan S."/>
            <person name="Koesema E."/>
            <person name="Ishida J."/>
            <person name="Jiang P.X."/>
            <person name="Jones T."/>
            <person name="Kawai J."/>
            <person name="Kamiya A."/>
            <person name="Meyers C."/>
            <person name="Nakajima M."/>
            <person name="Narusaka M."/>
            <person name="Seki M."/>
            <person name="Sakurai T."/>
            <person name="Satou M."/>
            <person name="Tamse R."/>
            <person name="Vaysberg M."/>
            <person name="Wallender E.K."/>
            <person name="Wong C."/>
            <person name="Yamamura Y."/>
            <person name="Yuan S."/>
            <person name="Shinozaki K."/>
            <person name="Davis R.W."/>
            <person name="Theologis A."/>
            <person name="Ecker J.R."/>
        </authorList>
    </citation>
    <scope>NUCLEOTIDE SEQUENCE [LARGE SCALE MRNA]</scope>
    <source>
        <strain>cv. Columbia</strain>
    </source>
</reference>
<reference key="7">
    <citation type="journal article" date="2009" name="Plant Physiol.">
        <title>Large-scale Arabidopsis phosphoproteome profiling reveals novel chloroplast kinase substrates and phosphorylation networks.</title>
        <authorList>
            <person name="Reiland S."/>
            <person name="Messerli G."/>
            <person name="Baerenfaller K."/>
            <person name="Gerrits B."/>
            <person name="Endler A."/>
            <person name="Grossmann J."/>
            <person name="Gruissem W."/>
            <person name="Baginsky S."/>
        </authorList>
    </citation>
    <scope>PHOSPHORYLATION [LARGE SCALE ANALYSIS] AT THR-90</scope>
    <scope>IDENTIFICATION BY MASS SPECTROMETRY [LARGE SCALE ANALYSIS]</scope>
</reference>
<protein>
    <recommendedName>
        <fullName>Dehydrin COR47</fullName>
    </recommendedName>
    <alternativeName>
        <fullName>Cold-induced COR47 protein</fullName>
    </alternativeName>
</protein>
<comment type="induction">
    <text>By cold shock, abscisic acid (ABA) and drought stress.</text>
</comment>
<comment type="similarity">
    <text evidence="4">Belongs to the plant dehydrin family.</text>
</comment>
<comment type="sequence caution" evidence="4">
    <conflict type="erroneous initiation">
        <sequence resource="EMBL-CDS" id="CAA42483"/>
    </conflict>
</comment>
<evidence type="ECO:0000250" key="1">
    <source>
        <dbReference type="UniProtKB" id="P42759"/>
    </source>
</evidence>
<evidence type="ECO:0000250" key="2">
    <source>
        <dbReference type="UniProtKB" id="P42763"/>
    </source>
</evidence>
<evidence type="ECO:0000256" key="3">
    <source>
        <dbReference type="SAM" id="MobiDB-lite"/>
    </source>
</evidence>
<evidence type="ECO:0000305" key="4"/>
<evidence type="ECO:0007744" key="5">
    <source>
    </source>
</evidence>
<feature type="initiator methionine" description="Removed" evidence="1">
    <location>
        <position position="1"/>
    </location>
</feature>
<feature type="chain" id="PRO_0000100040" description="Dehydrin COR47">
    <location>
        <begin position="2"/>
        <end position="265"/>
    </location>
</feature>
<feature type="repeat" description="1">
    <location>
        <begin position="133"/>
        <end position="153"/>
    </location>
</feature>
<feature type="repeat" description="2">
    <location>
        <begin position="180"/>
        <end position="200"/>
    </location>
</feature>
<feature type="repeat" description="3">
    <location>
        <begin position="231"/>
        <end position="251"/>
    </location>
</feature>
<feature type="region of interest" description="Disordered" evidence="3">
    <location>
        <begin position="1"/>
        <end position="265"/>
    </location>
</feature>
<feature type="region of interest" description="3 X 21 AA repeats, Lys-rich">
    <location>
        <begin position="133"/>
        <end position="251"/>
    </location>
</feature>
<feature type="compositionally biased region" description="Basic and acidic residues" evidence="3">
    <location>
        <begin position="1"/>
        <end position="14"/>
    </location>
</feature>
<feature type="compositionally biased region" description="Polar residues" evidence="3">
    <location>
        <begin position="16"/>
        <end position="28"/>
    </location>
</feature>
<feature type="compositionally biased region" description="Basic and acidic residues" evidence="3">
    <location>
        <begin position="29"/>
        <end position="47"/>
    </location>
</feature>
<feature type="compositionally biased region" description="Basic and acidic residues" evidence="3">
    <location>
        <begin position="69"/>
        <end position="79"/>
    </location>
</feature>
<feature type="compositionally biased region" description="Basic and acidic residues" evidence="3">
    <location>
        <begin position="96"/>
        <end position="105"/>
    </location>
</feature>
<feature type="compositionally biased region" description="Basic and acidic residues" evidence="3">
    <location>
        <begin position="129"/>
        <end position="156"/>
    </location>
</feature>
<feature type="compositionally biased region" description="Low complexity" evidence="3">
    <location>
        <begin position="160"/>
        <end position="172"/>
    </location>
</feature>
<feature type="compositionally biased region" description="Basic and acidic residues" evidence="3">
    <location>
        <begin position="173"/>
        <end position="204"/>
    </location>
</feature>
<feature type="compositionally biased region" description="Basic and acidic residues" evidence="3">
    <location>
        <begin position="227"/>
        <end position="265"/>
    </location>
</feature>
<feature type="modified residue" description="N-acetylalanine" evidence="1">
    <location>
        <position position="2"/>
    </location>
</feature>
<feature type="modified residue" description="Phosphoserine" evidence="2">
    <location>
        <position position="64"/>
    </location>
</feature>
<feature type="modified residue" description="Phosphothreonine" evidence="5">
    <location>
        <position position="90"/>
    </location>
</feature>
<feature type="sequence conflict" description="In Ref. 2; CAA62449." evidence="4" ref="2">
    <original>P</original>
    <variation>K</variation>
    <location>
        <position position="10"/>
    </location>
</feature>
<gene>
    <name type="primary">COR47</name>
    <name type="synonym">RD17</name>
    <name type="ordered locus">At1g20440</name>
    <name type="ORF">F5M15.22</name>
</gene>
<proteinExistence type="evidence at protein level"/>
<sequence>MAEEYKNNVPEHETPTVATEESPATTTEVTDRGLFDFLGKKEEEVKPQETTTLESEFDHKAQISEPELAAEHEEVKENKITLLEELQEKTEEDEENKPSVIEKLHRSNSSSSSSSDEEGEEKKEKKKKIVEGEEDKKGLVEKIKEKLPGHHDKTAEDDVPVSTTIPVPVSESVVEHDHPEEEKKGLVEKIKEKLPGHHDEKAEDSPAVTSTPLVVTEHPVEPTTELPVEHPEEKKGILEKIKEKLPGYHAKTTEEEVKKEKESDD</sequence>
<keyword id="KW-0007">Acetylation</keyword>
<keyword id="KW-0597">Phosphoprotein</keyword>
<keyword id="KW-1185">Reference proteome</keyword>
<keyword id="KW-0677">Repeat</keyword>
<keyword id="KW-0346">Stress response</keyword>
<organism>
    <name type="scientific">Arabidopsis thaliana</name>
    <name type="common">Mouse-ear cress</name>
    <dbReference type="NCBI Taxonomy" id="3702"/>
    <lineage>
        <taxon>Eukaryota</taxon>
        <taxon>Viridiplantae</taxon>
        <taxon>Streptophyta</taxon>
        <taxon>Embryophyta</taxon>
        <taxon>Tracheophyta</taxon>
        <taxon>Spermatophyta</taxon>
        <taxon>Magnoliopsida</taxon>
        <taxon>eudicotyledons</taxon>
        <taxon>Gunneridae</taxon>
        <taxon>Pentapetalae</taxon>
        <taxon>rosids</taxon>
        <taxon>malvids</taxon>
        <taxon>Brassicales</taxon>
        <taxon>Brassicaceae</taxon>
        <taxon>Camelineae</taxon>
        <taxon>Arabidopsis</taxon>
    </lineage>
</organism>
<dbReference type="EMBL" id="X59814">
    <property type="protein sequence ID" value="CAA42483.1"/>
    <property type="status" value="ALT_INIT"/>
    <property type="molecule type" value="mRNA"/>
</dbReference>
<dbReference type="EMBL" id="X90959">
    <property type="protein sequence ID" value="CAA62449.1"/>
    <property type="molecule type" value="Genomic_DNA"/>
</dbReference>
<dbReference type="EMBL" id="AB004872">
    <property type="protein sequence ID" value="BAA23547.1"/>
    <property type="molecule type" value="Genomic_DNA"/>
</dbReference>
<dbReference type="EMBL" id="AC027665">
    <property type="protein sequence ID" value="AAF79614.1"/>
    <property type="molecule type" value="Genomic_DNA"/>
</dbReference>
<dbReference type="EMBL" id="CP002684">
    <property type="protein sequence ID" value="AEE29972.1"/>
    <property type="molecule type" value="Genomic_DNA"/>
</dbReference>
<dbReference type="EMBL" id="AY072392">
    <property type="protein sequence ID" value="AAL62384.1"/>
    <property type="molecule type" value="mRNA"/>
</dbReference>
<dbReference type="EMBL" id="AY114699">
    <property type="protein sequence ID" value="AAM48018.1"/>
    <property type="molecule type" value="mRNA"/>
</dbReference>
<dbReference type="PIR" id="B86338">
    <property type="entry name" value="B86338"/>
</dbReference>
<dbReference type="PIR" id="S19226">
    <property type="entry name" value="S19226"/>
</dbReference>
<dbReference type="RefSeq" id="NP_173468.1">
    <property type="nucleotide sequence ID" value="NM_101894.4"/>
</dbReference>
<dbReference type="BioGRID" id="23871">
    <property type="interactions" value="1"/>
</dbReference>
<dbReference type="FunCoup" id="P31168">
    <property type="interactions" value="81"/>
</dbReference>
<dbReference type="STRING" id="3702.P31168"/>
<dbReference type="iPTMnet" id="P31168"/>
<dbReference type="PaxDb" id="3702-AT1G20440.1"/>
<dbReference type="ProteomicsDB" id="241109"/>
<dbReference type="EnsemblPlants" id="AT1G20440.1">
    <property type="protein sequence ID" value="AT1G20440.1"/>
    <property type="gene ID" value="AT1G20440"/>
</dbReference>
<dbReference type="GeneID" id="838632"/>
<dbReference type="Gramene" id="AT1G20440.1">
    <property type="protein sequence ID" value="AT1G20440.1"/>
    <property type="gene ID" value="AT1G20440"/>
</dbReference>
<dbReference type="KEGG" id="ath:AT1G20440"/>
<dbReference type="Araport" id="AT1G20440"/>
<dbReference type="TAIR" id="AT1G20440">
    <property type="gene designation" value="COR47"/>
</dbReference>
<dbReference type="eggNOG" id="ENOG502SRR2">
    <property type="taxonomic scope" value="Eukaryota"/>
</dbReference>
<dbReference type="HOGENOM" id="CLU_081104_0_0_1"/>
<dbReference type="InParanoid" id="P31168"/>
<dbReference type="OMA" id="FDHKAQI"/>
<dbReference type="OrthoDB" id="1934367at2759"/>
<dbReference type="PhylomeDB" id="P31168"/>
<dbReference type="PRO" id="PR:P31168"/>
<dbReference type="Proteomes" id="UP000006548">
    <property type="component" value="Chromosome 1"/>
</dbReference>
<dbReference type="ExpressionAtlas" id="P31168">
    <property type="expression patterns" value="baseline and differential"/>
</dbReference>
<dbReference type="GO" id="GO:0005829">
    <property type="term" value="C:cytosol"/>
    <property type="evidence" value="ECO:0007005"/>
    <property type="project" value="TAIR"/>
</dbReference>
<dbReference type="GO" id="GO:0005634">
    <property type="term" value="C:nucleus"/>
    <property type="evidence" value="ECO:0007005"/>
    <property type="project" value="TAIR"/>
</dbReference>
<dbReference type="GO" id="GO:0005507">
    <property type="term" value="F:copper ion binding"/>
    <property type="evidence" value="ECO:0000314"/>
    <property type="project" value="CAFA"/>
</dbReference>
<dbReference type="GO" id="GO:0016151">
    <property type="term" value="F:nickel cation binding"/>
    <property type="evidence" value="ECO:0000314"/>
    <property type="project" value="CAFA"/>
</dbReference>
<dbReference type="GO" id="GO:0009631">
    <property type="term" value="P:cold acclimation"/>
    <property type="evidence" value="ECO:0000316"/>
    <property type="project" value="TAIR"/>
</dbReference>
<dbReference type="GO" id="GO:0050832">
    <property type="term" value="P:defense response to fungus"/>
    <property type="evidence" value="ECO:0000270"/>
    <property type="project" value="TAIR"/>
</dbReference>
<dbReference type="GO" id="GO:0010286">
    <property type="term" value="P:heat acclimation"/>
    <property type="evidence" value="ECO:0000270"/>
    <property type="project" value="TAIR"/>
</dbReference>
<dbReference type="GO" id="GO:0009737">
    <property type="term" value="P:response to abscisic acid"/>
    <property type="evidence" value="ECO:0000315"/>
    <property type="project" value="TAIR"/>
</dbReference>
<dbReference type="GO" id="GO:0009409">
    <property type="term" value="P:response to cold"/>
    <property type="evidence" value="ECO:0000270"/>
    <property type="project" value="TAIR"/>
</dbReference>
<dbReference type="GO" id="GO:0009408">
    <property type="term" value="P:response to heat"/>
    <property type="evidence" value="ECO:0000270"/>
    <property type="project" value="TAIR"/>
</dbReference>
<dbReference type="GO" id="GO:0006970">
    <property type="term" value="P:response to osmotic stress"/>
    <property type="evidence" value="ECO:0000316"/>
    <property type="project" value="TAIR"/>
</dbReference>
<dbReference type="GO" id="GO:0009414">
    <property type="term" value="P:response to water deprivation"/>
    <property type="evidence" value="ECO:0000315"/>
    <property type="project" value="TAIR"/>
</dbReference>
<dbReference type="DisProt" id="DP00657"/>
<dbReference type="InterPro" id="IPR000167">
    <property type="entry name" value="Dehydrin"/>
</dbReference>
<dbReference type="InterPro" id="IPR030513">
    <property type="entry name" value="Dehydrin_CS"/>
</dbReference>
<dbReference type="PANTHER" id="PTHR33346:SF11">
    <property type="entry name" value="DEHYDRIN COR47-RELATED"/>
    <property type="match status" value="1"/>
</dbReference>
<dbReference type="PANTHER" id="PTHR33346">
    <property type="entry name" value="DEHYDRIN XERO 2-RELATED"/>
    <property type="match status" value="1"/>
</dbReference>
<dbReference type="Pfam" id="PF00257">
    <property type="entry name" value="Dehydrin"/>
    <property type="match status" value="1"/>
</dbReference>
<dbReference type="PROSITE" id="PS00315">
    <property type="entry name" value="DEHYDRIN_1"/>
    <property type="match status" value="1"/>
</dbReference>
<dbReference type="PROSITE" id="PS00823">
    <property type="entry name" value="DEHYDRIN_2"/>
    <property type="match status" value="3"/>
</dbReference>
<name>COR47_ARATH</name>